<reference key="1">
    <citation type="journal article" date="2007" name="Biochem. Biophys. Res. Commun.">
        <title>Desaturase genes in a psychrotolerant Nostoc sp. are constitutively expressed at low temperature.</title>
        <authorList>
            <person name="Chintalapati S."/>
            <person name="Prakash J.S.S."/>
            <person name="Singh A.K."/>
            <person name="Ohtani S."/>
            <person name="Suzuki I."/>
            <person name="Murata N."/>
            <person name="Shivaji S."/>
        </authorList>
    </citation>
    <scope>NUCLEOTIDE SEQUENCE [GENOMIC DNA]</scope>
    <scope>TRANSCRIPTIONAL REGULATION</scope>
    <source>
        <strain>36</strain>
    </source>
</reference>
<keyword id="KW-0275">Fatty acid biosynthesis</keyword>
<keyword id="KW-0276">Fatty acid metabolism</keyword>
<keyword id="KW-0408">Iron</keyword>
<keyword id="KW-0444">Lipid biosynthesis</keyword>
<keyword id="KW-0443">Lipid metabolism</keyword>
<keyword id="KW-0472">Membrane</keyword>
<keyword id="KW-0560">Oxidoreductase</keyword>
<keyword id="KW-0812">Transmembrane</keyword>
<keyword id="KW-1133">Transmembrane helix</keyword>
<gene>
    <name evidence="7" type="primary">desB</name>
</gene>
<sequence length="359" mass="41818">MQLDTISFNNPLNSETSEDTTKLPFTLGDLKAAIPAECFQPNVTKSLFYFFRDILIIGLLYAVASYLDSWLFFPIFWLMQGTMFWALFVVGHDCGHQSFSKQKWLNDLIGHLSHTPILVPYHGWRISHRTHHKNTGNIDNDESWYPVTESQYKDMPLAQKIGRYYVFLLAYPVYLFKRSPNKEGSHFLPSSSLFKPSEKWDVLTSTVLLIGMVGLLGFLTYQWGWMWLLKYYAVPYLVFIVWLDLVTFLHHTEPELPWYRGEDWTFLKGAISSIDRDYGLVYHIHHDIGTHVAHHIFLNIPHYNLLKATEAIKPVMGEYFHKSEEPIWKSLWNSCISCHFVPDTGSKVYYTSKNKSAKA</sequence>
<comment type="function">
    <text evidence="3 9">Desaturase involved in fatty acid biosynthesis (Probable). Introduces a double bond at carbon 15 of linoleoyl and gamma-linolenoyl groups attached to the sn-1 position of the glycerol moiety of membrane glycerolipids (By similarity).</text>
</comment>
<comment type="catalytic activity">
    <reaction evidence="3">
        <text>a 1-[(9Z,12Z)-octadecdienoyl]-2-acyl-glycerolipid + 2 reduced [2Fe-2S]-[ferredoxin] + O2 + 2 H(+) = a 1-[(9Z,12Z,15Z)-octadectrienoyl]-2-acyl-glycerolipid + 2 oxidized [2Fe-2S]-[ferredoxin] + 2 H2O</text>
        <dbReference type="Rhea" id="RHEA:46784"/>
        <dbReference type="Rhea" id="RHEA-COMP:10000"/>
        <dbReference type="Rhea" id="RHEA-COMP:10001"/>
        <dbReference type="ChEBI" id="CHEBI:15377"/>
        <dbReference type="ChEBI" id="CHEBI:15378"/>
        <dbReference type="ChEBI" id="CHEBI:15379"/>
        <dbReference type="ChEBI" id="CHEBI:33737"/>
        <dbReference type="ChEBI" id="CHEBI:33738"/>
        <dbReference type="ChEBI" id="CHEBI:87010"/>
        <dbReference type="ChEBI" id="CHEBI:87023"/>
        <dbReference type="EC" id="1.14.19.36"/>
    </reaction>
    <physiologicalReaction direction="left-to-right" evidence="3">
        <dbReference type="Rhea" id="RHEA:46785"/>
    </physiologicalReaction>
</comment>
<comment type="catalytic activity">
    <reaction evidence="3">
        <text>a 1-[(6Z,9Z,12Z)-octadectrienoyl]-2-acyl-glycerolipid + 2 reduced [2Fe-2S]-[ferredoxin] + O2 + 2 H(+) = a 1-[(6Z,9Z,12Z,15Z)-octadectetraenoyl]-2-acyl-glycerolipid + 2 oxidized [2Fe-2S]-[ferredoxin] + 2 H2O</text>
        <dbReference type="Rhea" id="RHEA:46788"/>
        <dbReference type="Rhea" id="RHEA-COMP:10000"/>
        <dbReference type="Rhea" id="RHEA-COMP:10001"/>
        <dbReference type="ChEBI" id="CHEBI:15377"/>
        <dbReference type="ChEBI" id="CHEBI:15378"/>
        <dbReference type="ChEBI" id="CHEBI:15379"/>
        <dbReference type="ChEBI" id="CHEBI:33737"/>
        <dbReference type="ChEBI" id="CHEBI:33738"/>
        <dbReference type="ChEBI" id="CHEBI:87017"/>
        <dbReference type="ChEBI" id="CHEBI:87024"/>
        <dbReference type="EC" id="1.14.19.36"/>
    </reaction>
    <physiologicalReaction direction="left-to-right" evidence="3">
        <dbReference type="Rhea" id="RHEA:46789"/>
    </physiologicalReaction>
</comment>
<comment type="cofactor">
    <cofactor evidence="1">
        <name>Fe(2+)</name>
        <dbReference type="ChEBI" id="CHEBI:29033"/>
    </cofactor>
</comment>
<comment type="pathway">
    <text evidence="9">Lipid metabolism; polyunsaturated fatty acid biosynthesis.</text>
</comment>
<comment type="subcellular location">
    <subcellularLocation>
        <location evidence="4">Membrane</location>
        <topology evidence="4">Multi-pass membrane protein</topology>
    </subcellularLocation>
</comment>
<comment type="induction">
    <text evidence="6">Constitutively expressed at low temperature.</text>
</comment>
<comment type="domain">
    <text evidence="1">The histidine box domains are involved in binding the catalytic metal ions.</text>
</comment>
<comment type="similarity">
    <text evidence="8">Belongs to the fatty acid desaturase type 2 family.</text>
</comment>
<protein>
    <recommendedName>
        <fullName evidence="8">sn-1 acyl-lipid omega-3 desaturase (ferredoxin)</fullName>
        <ecNumber evidence="3">1.14.19.36</ecNumber>
    </recommendedName>
    <alternativeName>
        <fullName evidence="8">Delta(15)-fatty-acid desaturase</fullName>
        <shortName evidence="8">Delta 15 desaturase</shortName>
    </alternativeName>
    <alternativeName>
        <fullName evidence="10">Omega 3 acyl-lipid desaturase</fullName>
        <shortName evidence="8">Omega 3 desaturase</shortName>
    </alternativeName>
</protein>
<accession>Q704F0</accession>
<feature type="chain" id="PRO_0000459795" description="sn-1 acyl-lipid omega-3 desaturase (ferredoxin)">
    <location>
        <begin position="1"/>
        <end position="359"/>
    </location>
</feature>
<feature type="transmembrane region" description="Helical" evidence="4">
    <location>
        <begin position="47"/>
        <end position="67"/>
    </location>
</feature>
<feature type="transmembrane region" description="Helical" evidence="4">
    <location>
        <begin position="70"/>
        <end position="90"/>
    </location>
</feature>
<feature type="transmembrane region" description="Helical" evidence="4">
    <location>
        <begin position="207"/>
        <end position="227"/>
    </location>
</feature>
<feature type="transmembrane region" description="Helical" evidence="4">
    <location>
        <begin position="228"/>
        <end position="248"/>
    </location>
</feature>
<feature type="region of interest" description="Disordered" evidence="5">
    <location>
        <begin position="1"/>
        <end position="20"/>
    </location>
</feature>
<feature type="short sequence motif" description="Histidine box-1" evidence="2">
    <location>
        <begin position="92"/>
        <end position="96"/>
    </location>
</feature>
<feature type="short sequence motif" description="Histidine box-2" evidence="2">
    <location>
        <begin position="128"/>
        <end position="132"/>
    </location>
</feature>
<feature type="short sequence motif" description="Histidine box-3" evidence="2">
    <location>
        <begin position="294"/>
        <end position="298"/>
    </location>
</feature>
<feature type="compositionally biased region" description="Polar residues" evidence="5">
    <location>
        <begin position="1"/>
        <end position="15"/>
    </location>
</feature>
<name>DESB_NOSS3</name>
<dbReference type="EC" id="1.14.19.36" evidence="3"/>
<dbReference type="EMBL" id="AJ621246">
    <property type="protein sequence ID" value="CAF18425.1"/>
    <property type="molecule type" value="Genomic_DNA"/>
</dbReference>
<dbReference type="SMR" id="Q704F0"/>
<dbReference type="BRENDA" id="1.14.19.36">
    <property type="organism ID" value="4371"/>
</dbReference>
<dbReference type="UniPathway" id="UPA00658"/>
<dbReference type="GO" id="GO:0016020">
    <property type="term" value="C:membrane"/>
    <property type="evidence" value="ECO:0007669"/>
    <property type="project" value="UniProtKB-SubCell"/>
</dbReference>
<dbReference type="GO" id="GO:0016491">
    <property type="term" value="F:oxidoreductase activity"/>
    <property type="evidence" value="ECO:0007669"/>
    <property type="project" value="UniProtKB-KW"/>
</dbReference>
<dbReference type="GO" id="GO:0006636">
    <property type="term" value="P:unsaturated fatty acid biosynthetic process"/>
    <property type="evidence" value="ECO:0007669"/>
    <property type="project" value="UniProtKB-UniPathway"/>
</dbReference>
<dbReference type="CDD" id="cd03507">
    <property type="entry name" value="Delta12-FADS-like"/>
    <property type="match status" value="1"/>
</dbReference>
<dbReference type="InterPro" id="IPR005804">
    <property type="entry name" value="FA_desaturase_dom"/>
</dbReference>
<dbReference type="InterPro" id="IPR012171">
    <property type="entry name" value="Fatty_acid_desaturase"/>
</dbReference>
<dbReference type="PANTHER" id="PTHR32100">
    <property type="entry name" value="OMEGA-6 FATTY ACID DESATURASE, CHLOROPLASTIC"/>
    <property type="match status" value="1"/>
</dbReference>
<dbReference type="Pfam" id="PF00487">
    <property type="entry name" value="FA_desaturase"/>
    <property type="match status" value="1"/>
</dbReference>
<organism>
    <name type="scientific">Nostoc sp. (strain 36)</name>
    <dbReference type="NCBI Taxonomy" id="261476"/>
    <lineage>
        <taxon>Bacteria</taxon>
        <taxon>Bacillati</taxon>
        <taxon>Cyanobacteriota</taxon>
        <taxon>Cyanophyceae</taxon>
        <taxon>Nostocales</taxon>
        <taxon>Nostocaceae</taxon>
        <taxon>Nostoc</taxon>
    </lineage>
</organism>
<proteinExistence type="evidence at transcript level"/>
<evidence type="ECO:0000250" key="1">
    <source>
        <dbReference type="UniProtKB" id="O00767"/>
    </source>
</evidence>
<evidence type="ECO:0000250" key="2">
    <source>
        <dbReference type="UniProtKB" id="Q54795"/>
    </source>
</evidence>
<evidence type="ECO:0000250" key="3">
    <source>
        <dbReference type="UniProtKB" id="Q79EF1"/>
    </source>
</evidence>
<evidence type="ECO:0000255" key="4"/>
<evidence type="ECO:0000256" key="5">
    <source>
        <dbReference type="SAM" id="MobiDB-lite"/>
    </source>
</evidence>
<evidence type="ECO:0000269" key="6">
    <source>
    </source>
</evidence>
<evidence type="ECO:0000303" key="7">
    <source>
    </source>
</evidence>
<evidence type="ECO:0000305" key="8"/>
<evidence type="ECO:0000305" key="9">
    <source>
    </source>
</evidence>
<evidence type="ECO:0000312" key="10">
    <source>
        <dbReference type="EMBL" id="CAF18425.1"/>
    </source>
</evidence>